<keyword id="KW-0326">Glycosidase</keyword>
<keyword id="KW-0378">Hydrolase</keyword>
<keyword id="KW-0479">Metal-binding</keyword>
<keyword id="KW-0862">Zinc</keyword>
<sequence>MLGVCYYPEHWPKARWKEDARRMREAGLSYVRVGEFAWALLEPEPGRLEWGWLDEALATLAAEGLKVVLGTPTATPPKWLVDRYPEVLPVDREGRRRRFGGRRHYCFSSPAYREEARRIVTLLAERYGGLEAVAGFQTDNEYGCHGTVRCYCPRCQEAFRGWLKARYGTIEALNEAWGTAFWSQRYRNFTEVELPHLTVAEPNPSHLLDYYRFASDQVRAFNRLQVEILRAHAPGKFITHNFMGFFTDLDAFALAQDLDFASWDSYPLGFTDLMPLPPEEKLRYARTGHPDVAAFHHDLYRGVGRGRFWVMEQQPGPVNWAPHNPSPTPGMVRLWTWEALAHGAEVVSYFRWRQAPFAQEQMHAGLHRPDSAPDQGFFEAKQVAEELAALALPPVAQAPVALVFDYEAAWVYEVQPQGAEWSYLGLIYLFYSALRRLGLDVDVVPPGASLRGYALTVVPSLPIVRGEALKAFQEAEGIVLFGPRSGSKTETFQIPRELPPGPLQALLPLKVVRVESLPPGLLEVAEGPMGRFSLGLWREWVESPLRPWLAFADGGGALYREGRYLYLAAWPSPELLGVLLAGLAQEAGLRPVFLPEGLRLRRRGPWVFAFNYGPEAVEAPAPEGARFLLGGKRVGPYDLAVWEEA</sequence>
<comment type="function">
    <text evidence="3">Hydrolyzes chromogen 5-bromo-4-chloro-3-indolyl-beta-D-galactopyranoside (X-Gal) and p-nitrophenyl-beta-D-galactoside (pNPGal).</text>
</comment>
<comment type="catalytic activity">
    <reaction evidence="3">
        <text>Hydrolysis of terminal non-reducing beta-D-galactose residues in beta-D-galactosides.</text>
        <dbReference type="EC" id="3.2.1.23"/>
    </reaction>
</comment>
<comment type="biophysicochemical properties">
    <kinetics>
        <KM evidence="3">0.41 mM for pNPGal (at 70 degrees Celsius and pH 7.0)</KM>
        <KM evidence="3">42 mM for lactose (at 70 degrees Celsius and pH 7.0)</KM>
        <Vmax evidence="3">140.0 umol/min/mg enzyme with pNPGal as substrate (at 70 degrees Celsius and pH 7.0)</Vmax>
        <Vmax evidence="3">8.5 umol/min/mg enzyme with lactose as substrate (at 70 degrees Celsius and pH 7.0)</Vmax>
    </kinetics>
    <phDependence>
        <text evidence="3">Optimum pH is around 5.0-6.0. Retains more than 80% of activity at pH range between 4.5 and 6.5. Retains 10% of activity at pH 4.0.</text>
    </phDependence>
    <temperatureDependence>
        <text evidence="3">Optimum temperature is 90 degrees Celsius. Retains 90% of activity even at 95 degrees Celsius. Retains 80% of activity during a 12-hour period of incubation at 70 degrees Celsius. Half-lives at 80 and 90 degrees Celsius are 23 and 4.7 hours, respectively.</text>
    </temperatureDependence>
</comment>
<comment type="similarity">
    <text evidence="2">Belongs to the glycosyl hydrolase 42 family.</text>
</comment>
<organism>
    <name type="scientific">Thermus sp</name>
    <dbReference type="NCBI Taxonomy" id="275"/>
    <lineage>
        <taxon>Bacteria</taxon>
        <taxon>Thermotogati</taxon>
        <taxon>Deinococcota</taxon>
        <taxon>Deinococci</taxon>
        <taxon>Thermales</taxon>
        <taxon>Thermaceae</taxon>
        <taxon>Thermus</taxon>
    </lineage>
</organism>
<proteinExistence type="evidence at protein level"/>
<dbReference type="EC" id="3.2.1.23"/>
<dbReference type="EMBL" id="AY130259">
    <property type="protein sequence ID" value="AAN05443.1"/>
    <property type="molecule type" value="Genomic_DNA"/>
</dbReference>
<dbReference type="SMR" id="Q8GEA9"/>
<dbReference type="CAZy" id="GH42">
    <property type="family name" value="Glycoside Hydrolase Family 42"/>
</dbReference>
<dbReference type="GO" id="GO:0009341">
    <property type="term" value="C:beta-galactosidase complex"/>
    <property type="evidence" value="ECO:0007669"/>
    <property type="project" value="InterPro"/>
</dbReference>
<dbReference type="GO" id="GO:0004565">
    <property type="term" value="F:beta-galactosidase activity"/>
    <property type="evidence" value="ECO:0007669"/>
    <property type="project" value="UniProtKB-EC"/>
</dbReference>
<dbReference type="GO" id="GO:0046872">
    <property type="term" value="F:metal ion binding"/>
    <property type="evidence" value="ECO:0007669"/>
    <property type="project" value="UniProtKB-KW"/>
</dbReference>
<dbReference type="GO" id="GO:0006012">
    <property type="term" value="P:galactose metabolic process"/>
    <property type="evidence" value="ECO:0007669"/>
    <property type="project" value="InterPro"/>
</dbReference>
<dbReference type="CDD" id="cd03143">
    <property type="entry name" value="A4_beta-galactosidase_middle_domain"/>
    <property type="match status" value="1"/>
</dbReference>
<dbReference type="Gene3D" id="3.40.50.880">
    <property type="match status" value="1"/>
</dbReference>
<dbReference type="Gene3D" id="3.20.20.80">
    <property type="entry name" value="Glycosidases"/>
    <property type="match status" value="1"/>
</dbReference>
<dbReference type="Gene3D" id="2.60.40.1180">
    <property type="entry name" value="Golgi alpha-mannosidase II"/>
    <property type="match status" value="1"/>
</dbReference>
<dbReference type="InterPro" id="IPR013739">
    <property type="entry name" value="Beta_galactosidase_C"/>
</dbReference>
<dbReference type="InterPro" id="IPR013738">
    <property type="entry name" value="Beta_galactosidase_Trimer"/>
</dbReference>
<dbReference type="InterPro" id="IPR029062">
    <property type="entry name" value="Class_I_gatase-like"/>
</dbReference>
<dbReference type="InterPro" id="IPR003476">
    <property type="entry name" value="Glyco_hydro_42"/>
</dbReference>
<dbReference type="InterPro" id="IPR013529">
    <property type="entry name" value="Glyco_hydro_42_N"/>
</dbReference>
<dbReference type="InterPro" id="IPR013780">
    <property type="entry name" value="Glyco_hydro_b"/>
</dbReference>
<dbReference type="InterPro" id="IPR017853">
    <property type="entry name" value="Glycoside_hydrolase_SF"/>
</dbReference>
<dbReference type="PANTHER" id="PTHR36447">
    <property type="entry name" value="BETA-GALACTOSIDASE GANA"/>
    <property type="match status" value="1"/>
</dbReference>
<dbReference type="PANTHER" id="PTHR36447:SF2">
    <property type="entry name" value="BETA-GALACTOSIDASE YESZ"/>
    <property type="match status" value="1"/>
</dbReference>
<dbReference type="Pfam" id="PF02449">
    <property type="entry name" value="Glyco_hydro_42"/>
    <property type="match status" value="1"/>
</dbReference>
<dbReference type="Pfam" id="PF08533">
    <property type="entry name" value="Glyco_hydro_42C"/>
    <property type="match status" value="1"/>
</dbReference>
<dbReference type="Pfam" id="PF08532">
    <property type="entry name" value="Glyco_hydro_42M"/>
    <property type="match status" value="1"/>
</dbReference>
<dbReference type="PIRSF" id="PIRSF001084">
    <property type="entry name" value="B-galactosidase"/>
    <property type="match status" value="1"/>
</dbReference>
<dbReference type="SUPFAM" id="SSF51445">
    <property type="entry name" value="(Trans)glycosidases"/>
    <property type="match status" value="1"/>
</dbReference>
<dbReference type="SUPFAM" id="SSF52317">
    <property type="entry name" value="Class I glutamine amidotransferase-like"/>
    <property type="match status" value="1"/>
</dbReference>
<dbReference type="SUPFAM" id="SSF51011">
    <property type="entry name" value="Glycosyl hydrolase domain"/>
    <property type="match status" value="1"/>
</dbReference>
<evidence type="ECO:0000250" key="1">
    <source>
        <dbReference type="UniProtKB" id="O69315"/>
    </source>
</evidence>
<evidence type="ECO:0000255" key="2"/>
<evidence type="ECO:0000269" key="3">
    <source>
    </source>
</evidence>
<evidence type="ECO:0000303" key="4">
    <source>
    </source>
</evidence>
<evidence type="ECO:0000312" key="5">
    <source>
        <dbReference type="EMBL" id="AAN05443.1"/>
    </source>
</evidence>
<feature type="chain" id="PRO_0000407695" description="Beta-galactosidase BgaA">
    <location>
        <begin position="1"/>
        <end position="645"/>
    </location>
</feature>
<feature type="active site" description="Proton donor" evidence="1">
    <location>
        <position position="141"/>
    </location>
</feature>
<feature type="active site" description="Nucleophile" evidence="1">
    <location>
        <position position="312"/>
    </location>
</feature>
<feature type="binding site" evidence="1">
    <location>
        <position position="102"/>
    </location>
    <ligand>
        <name>substrate</name>
    </ligand>
</feature>
<feature type="binding site" evidence="1">
    <location>
        <position position="106"/>
    </location>
    <ligand>
        <name>Zn(2+)</name>
        <dbReference type="ChEBI" id="CHEBI:29105"/>
    </ligand>
</feature>
<feature type="binding site" evidence="1">
    <location>
        <position position="140"/>
    </location>
    <ligand>
        <name>substrate</name>
    </ligand>
</feature>
<feature type="binding site" evidence="1">
    <location>
        <position position="150"/>
    </location>
    <ligand>
        <name>Zn(2+)</name>
        <dbReference type="ChEBI" id="CHEBI:29105"/>
    </ligand>
</feature>
<feature type="binding site" evidence="1">
    <location>
        <position position="152"/>
    </location>
    <ligand>
        <name>Zn(2+)</name>
        <dbReference type="ChEBI" id="CHEBI:29105"/>
    </ligand>
</feature>
<feature type="binding site" evidence="1">
    <location>
        <position position="155"/>
    </location>
    <ligand>
        <name>Zn(2+)</name>
        <dbReference type="ChEBI" id="CHEBI:29105"/>
    </ligand>
</feature>
<feature type="binding site" evidence="1">
    <location>
        <position position="320"/>
    </location>
    <ligand>
        <name>substrate</name>
    </ligand>
</feature>
<feature type="binding site" evidence="1">
    <location>
        <begin position="360"/>
        <end position="363"/>
    </location>
    <ligand>
        <name>substrate</name>
    </ligand>
</feature>
<reference evidence="5" key="1">
    <citation type="journal article" date="2005" name="J. Biotechnol.">
        <title>Three forms of thermostable lactose-hydrolase from Thermus sp. IB-21: cloning, expression, and enzyme characterization.</title>
        <authorList>
            <person name="Kang S.K."/>
            <person name="Cho K.K."/>
            <person name="Ahn J.K."/>
            <person name="Bok J.D."/>
            <person name="Kang S.H."/>
            <person name="Woo J.H."/>
            <person name="Lee H.G."/>
            <person name="You S.K."/>
            <person name="Choi Y.J."/>
        </authorList>
    </citation>
    <scope>NUCLEOTIDE SEQUENCE [GENOMIC DNA]</scope>
    <scope>FUNCTION</scope>
    <scope>CATALYTIC ACTIVITY</scope>
    <scope>BIOPHYSICOCHEMICAL PROPERTIES</scope>
    <source>
        <strain evidence="5">ATCC 43815 / IB-21</strain>
    </source>
</reference>
<protein>
    <recommendedName>
        <fullName>Beta-galactosidase BgaA</fullName>
        <shortName evidence="1">Beta-gal</shortName>
        <ecNumber>3.2.1.23</ecNumber>
    </recommendedName>
</protein>
<name>BGAL1_THESP</name>
<accession>Q8GEA9</accession>
<gene>
    <name evidence="4" type="primary">bgaA</name>
</gene>